<comment type="function">
    <text evidence="1">Transcriptional activator which binds specifically to the MEF2 element, 5'-YTA[AT](4)TAR-3', found in numerous muscle-specific, growth factor- and stress-induced genes. Mediates cellular functions not only in skeletal and cardiac muscle development, but also in neuronal differentiation and survival. Plays diverse roles in the control of cell growth, survival and apoptosis via p38 MAPK signaling in muscle-specific and/or growth factor-related transcription. Plays a critical role in the regulation of neuronal apoptosis (By similarity).</text>
</comment>
<comment type="subunit">
    <text evidence="2 3 7">Forms a complex with class II HDACs in undifferentiating cells. On myogenic differentiation, HDACs are released into the cytoplasm allowing MEF2s to interact with other proteins for activation. Interacts with HDAC4 (in undifferentiating cells); the interaction translocates MEF2D to nuclear dots (By similarity). Forms a heterodimer with MEF2A (By similarity). Interacts with MAPK7; the interaction phosphorylates but does not activate MEF2D (PubMed:9753748). Interacts with MYOG (By similarity). Interacts with CCAR2 and HDAC3 (By similarity).</text>
</comment>
<comment type="subcellular location">
    <subcellularLocation>
        <location>Nucleus</location>
    </subcellularLocation>
    <text evidence="1">Translocated by HDAC4 to nuclear dots.</text>
</comment>
<comment type="PTM">
    <text evidence="1">Phosphorylated on Ser-430 by CDK5 is required for Lys-425 sumoylation and inhibits transcriptional activity. In neurons, enhanced CDK5 activity induced by neurotoxins promotes caspase 3-mediated cleavage leading to neuron apoptosis. Phosphorylation on Ser-180 can be enhanced by EGF. Phosphorylated and activated by CaMK4 (By similarity).</text>
</comment>
<comment type="PTM">
    <text evidence="2">Acetylated on Lys-425 by CREBBP. Acetylated by EP300. Deacetylated by SIRT1 and HDAC3 (By similarity).</text>
</comment>
<comment type="PTM">
    <text evidence="1">Sumoylated on Lys-425 with SUMO2 but not SUMO1; which inhibits transcriptional activity and myogenic activity. Desumoylated by SENP3 (By similarity).</text>
</comment>
<keyword id="KW-0007">Acetylation</keyword>
<keyword id="KW-0010">Activator</keyword>
<keyword id="KW-0053">Apoptosis</keyword>
<keyword id="KW-0217">Developmental protein</keyword>
<keyword id="KW-0221">Differentiation</keyword>
<keyword id="KW-0238">DNA-binding</keyword>
<keyword id="KW-1017">Isopeptide bond</keyword>
<keyword id="KW-0524">Neurogenesis</keyword>
<keyword id="KW-0539">Nucleus</keyword>
<keyword id="KW-0597">Phosphoprotein</keyword>
<keyword id="KW-1185">Reference proteome</keyword>
<keyword id="KW-0804">Transcription</keyword>
<keyword id="KW-0805">Transcription regulation</keyword>
<keyword id="KW-0832">Ubl conjugation</keyword>
<accession>O89038</accession>
<accession>Q66HL8</accession>
<dbReference type="EMBL" id="AJ005425">
    <property type="protein sequence ID" value="CAA06531.1"/>
    <property type="molecule type" value="mRNA"/>
</dbReference>
<dbReference type="EMBL" id="BC081790">
    <property type="protein sequence ID" value="AAH81790.1"/>
    <property type="molecule type" value="mRNA"/>
</dbReference>
<dbReference type="RefSeq" id="NP_110487.2">
    <property type="nucleotide sequence ID" value="NM_030860.2"/>
</dbReference>
<dbReference type="RefSeq" id="XP_017446620.1">
    <property type="nucleotide sequence ID" value="XM_017591131.1"/>
</dbReference>
<dbReference type="SMR" id="O89038"/>
<dbReference type="BioGRID" id="249515">
    <property type="interactions" value="5"/>
</dbReference>
<dbReference type="FunCoup" id="O89038">
    <property type="interactions" value="1260"/>
</dbReference>
<dbReference type="STRING" id="10116.ENSRNOP00000041061"/>
<dbReference type="GlyGen" id="O89038">
    <property type="glycosylation" value="3 sites, 1 O-linked glycan (1 site)"/>
</dbReference>
<dbReference type="iPTMnet" id="O89038"/>
<dbReference type="PhosphoSitePlus" id="O89038"/>
<dbReference type="PaxDb" id="10116-ENSRNOP00000041061"/>
<dbReference type="GeneID" id="81518"/>
<dbReference type="KEGG" id="rno:81518"/>
<dbReference type="AGR" id="RGD:621489"/>
<dbReference type="CTD" id="4209"/>
<dbReference type="RGD" id="621489">
    <property type="gene designation" value="Mef2d"/>
</dbReference>
<dbReference type="eggNOG" id="KOG0014">
    <property type="taxonomic scope" value="Eukaryota"/>
</dbReference>
<dbReference type="InParanoid" id="O89038"/>
<dbReference type="OrthoDB" id="1898716at2759"/>
<dbReference type="PhylomeDB" id="O89038"/>
<dbReference type="Reactome" id="R-RNO-525793">
    <property type="pathway name" value="Myogenesis"/>
</dbReference>
<dbReference type="PRO" id="PR:O89038"/>
<dbReference type="Proteomes" id="UP000002494">
    <property type="component" value="Unplaced"/>
</dbReference>
<dbReference type="GO" id="GO:0005737">
    <property type="term" value="C:cytoplasm"/>
    <property type="evidence" value="ECO:0000266"/>
    <property type="project" value="RGD"/>
</dbReference>
<dbReference type="GO" id="GO:0005634">
    <property type="term" value="C:nucleus"/>
    <property type="evidence" value="ECO:0000314"/>
    <property type="project" value="UniProtKB"/>
</dbReference>
<dbReference type="GO" id="GO:0003677">
    <property type="term" value="F:DNA binding"/>
    <property type="evidence" value="ECO:0000266"/>
    <property type="project" value="RGD"/>
</dbReference>
<dbReference type="GO" id="GO:0001228">
    <property type="term" value="F:DNA-binding transcription activator activity, RNA polymerase II-specific"/>
    <property type="evidence" value="ECO:0000266"/>
    <property type="project" value="RGD"/>
</dbReference>
<dbReference type="GO" id="GO:0003700">
    <property type="term" value="F:DNA-binding transcription factor activity"/>
    <property type="evidence" value="ECO:0000266"/>
    <property type="project" value="RGD"/>
</dbReference>
<dbReference type="GO" id="GO:0000981">
    <property type="term" value="F:DNA-binding transcription factor activity, RNA polymerase II-specific"/>
    <property type="evidence" value="ECO:0000266"/>
    <property type="project" value="RGD"/>
</dbReference>
<dbReference type="GO" id="GO:0140297">
    <property type="term" value="F:DNA-binding transcription factor binding"/>
    <property type="evidence" value="ECO:0000266"/>
    <property type="project" value="RGD"/>
</dbReference>
<dbReference type="GO" id="GO:0019899">
    <property type="term" value="F:enzyme binding"/>
    <property type="evidence" value="ECO:0000266"/>
    <property type="project" value="RGD"/>
</dbReference>
<dbReference type="GO" id="GO:0042826">
    <property type="term" value="F:histone deacetylase binding"/>
    <property type="evidence" value="ECO:0000266"/>
    <property type="project" value="RGD"/>
</dbReference>
<dbReference type="GO" id="GO:0046982">
    <property type="term" value="F:protein heterodimerization activity"/>
    <property type="evidence" value="ECO:0000266"/>
    <property type="project" value="RGD"/>
</dbReference>
<dbReference type="GO" id="GO:0042803">
    <property type="term" value="F:protein homodimerization activity"/>
    <property type="evidence" value="ECO:0000266"/>
    <property type="project" value="RGD"/>
</dbReference>
<dbReference type="GO" id="GO:0000978">
    <property type="term" value="F:RNA polymerase II cis-regulatory region sequence-specific DNA binding"/>
    <property type="evidence" value="ECO:0000266"/>
    <property type="project" value="RGD"/>
</dbReference>
<dbReference type="GO" id="GO:0000977">
    <property type="term" value="F:RNA polymerase II transcription regulatory region sequence-specific DNA binding"/>
    <property type="evidence" value="ECO:0000266"/>
    <property type="project" value="RGD"/>
</dbReference>
<dbReference type="GO" id="GO:0061629">
    <property type="term" value="F:RNA polymerase II-specific DNA-binding transcription factor binding"/>
    <property type="evidence" value="ECO:0000266"/>
    <property type="project" value="RGD"/>
</dbReference>
<dbReference type="GO" id="GO:1990837">
    <property type="term" value="F:sequence-specific double-stranded DNA binding"/>
    <property type="evidence" value="ECO:0000266"/>
    <property type="project" value="RGD"/>
</dbReference>
<dbReference type="GO" id="GO:0007512">
    <property type="term" value="P:adult heart development"/>
    <property type="evidence" value="ECO:0000266"/>
    <property type="project" value="RGD"/>
</dbReference>
<dbReference type="GO" id="GO:0006915">
    <property type="term" value="P:apoptotic process"/>
    <property type="evidence" value="ECO:0007669"/>
    <property type="project" value="UniProtKB-KW"/>
</dbReference>
<dbReference type="GO" id="GO:0030154">
    <property type="term" value="P:cell differentiation"/>
    <property type="evidence" value="ECO:0000318"/>
    <property type="project" value="GO_Central"/>
</dbReference>
<dbReference type="GO" id="GO:0002062">
    <property type="term" value="P:chondrocyte differentiation"/>
    <property type="evidence" value="ECO:0000266"/>
    <property type="project" value="RGD"/>
</dbReference>
<dbReference type="GO" id="GO:0001958">
    <property type="term" value="P:endochondral ossification"/>
    <property type="evidence" value="ECO:0000266"/>
    <property type="project" value="RGD"/>
</dbReference>
<dbReference type="GO" id="GO:0007399">
    <property type="term" value="P:nervous system development"/>
    <property type="evidence" value="ECO:0007669"/>
    <property type="project" value="UniProtKB-KW"/>
</dbReference>
<dbReference type="GO" id="GO:0001649">
    <property type="term" value="P:osteoblast differentiation"/>
    <property type="evidence" value="ECO:0000266"/>
    <property type="project" value="RGD"/>
</dbReference>
<dbReference type="GO" id="GO:0045893">
    <property type="term" value="P:positive regulation of DNA-templated transcription"/>
    <property type="evidence" value="ECO:0000315"/>
    <property type="project" value="UniProtKB"/>
</dbReference>
<dbReference type="GO" id="GO:0045944">
    <property type="term" value="P:positive regulation of transcription by RNA polymerase II"/>
    <property type="evidence" value="ECO:0000266"/>
    <property type="project" value="RGD"/>
</dbReference>
<dbReference type="GO" id="GO:1904707">
    <property type="term" value="P:positive regulation of vascular associated smooth muscle cell proliferation"/>
    <property type="evidence" value="ECO:0000266"/>
    <property type="project" value="RGD"/>
</dbReference>
<dbReference type="GO" id="GO:0006355">
    <property type="term" value="P:regulation of DNA-templated transcription"/>
    <property type="evidence" value="ECO:0000266"/>
    <property type="project" value="RGD"/>
</dbReference>
<dbReference type="GO" id="GO:0035914">
    <property type="term" value="P:skeletal muscle cell differentiation"/>
    <property type="evidence" value="ECO:0000266"/>
    <property type="project" value="RGD"/>
</dbReference>
<dbReference type="CDD" id="cd00265">
    <property type="entry name" value="MADS_MEF2_like"/>
    <property type="match status" value="1"/>
</dbReference>
<dbReference type="FunFam" id="3.40.1810.10:FF:000001">
    <property type="entry name" value="Myocyte-specific enhancer factor 2A homolog"/>
    <property type="match status" value="1"/>
</dbReference>
<dbReference type="Gene3D" id="3.40.1810.10">
    <property type="entry name" value="Transcription factor, MADS-box"/>
    <property type="match status" value="1"/>
</dbReference>
<dbReference type="InterPro" id="IPR022102">
    <property type="entry name" value="HJURP_C"/>
</dbReference>
<dbReference type="InterPro" id="IPR033896">
    <property type="entry name" value="MEF2-like_N"/>
</dbReference>
<dbReference type="InterPro" id="IPR002100">
    <property type="entry name" value="TF_MADSbox"/>
</dbReference>
<dbReference type="InterPro" id="IPR036879">
    <property type="entry name" value="TF_MADSbox_sf"/>
</dbReference>
<dbReference type="PANTHER" id="PTHR11945">
    <property type="entry name" value="MADS BOX PROTEIN"/>
    <property type="match status" value="1"/>
</dbReference>
<dbReference type="PANTHER" id="PTHR11945:SF23">
    <property type="entry name" value="MYOCYTE-SPECIFIC ENHANCER FACTOR 2D"/>
    <property type="match status" value="1"/>
</dbReference>
<dbReference type="Pfam" id="PF12347">
    <property type="entry name" value="HJURP_C"/>
    <property type="match status" value="1"/>
</dbReference>
<dbReference type="Pfam" id="PF00319">
    <property type="entry name" value="SRF-TF"/>
    <property type="match status" value="1"/>
</dbReference>
<dbReference type="PRINTS" id="PR00404">
    <property type="entry name" value="MADSDOMAIN"/>
</dbReference>
<dbReference type="SMART" id="SM00432">
    <property type="entry name" value="MADS"/>
    <property type="match status" value="1"/>
</dbReference>
<dbReference type="SUPFAM" id="SSF55455">
    <property type="entry name" value="SRF-like"/>
    <property type="match status" value="1"/>
</dbReference>
<dbReference type="PROSITE" id="PS00350">
    <property type="entry name" value="MADS_BOX_1"/>
    <property type="match status" value="1"/>
</dbReference>
<dbReference type="PROSITE" id="PS50066">
    <property type="entry name" value="MADS_BOX_2"/>
    <property type="match status" value="1"/>
</dbReference>
<evidence type="ECO:0000250" key="1"/>
<evidence type="ECO:0000250" key="2">
    <source>
        <dbReference type="UniProtKB" id="Q14814"/>
    </source>
</evidence>
<evidence type="ECO:0000250" key="3">
    <source>
        <dbReference type="UniProtKB" id="Q63943"/>
    </source>
</evidence>
<evidence type="ECO:0000255" key="4"/>
<evidence type="ECO:0000255" key="5">
    <source>
        <dbReference type="PROSITE-ProRule" id="PRU00251"/>
    </source>
</evidence>
<evidence type="ECO:0000256" key="6">
    <source>
        <dbReference type="SAM" id="MobiDB-lite"/>
    </source>
</evidence>
<evidence type="ECO:0000269" key="7">
    <source>
    </source>
</evidence>
<evidence type="ECO:0000305" key="8"/>
<evidence type="ECO:0007744" key="9">
    <source>
    </source>
</evidence>
<feature type="chain" id="PRO_0000366974" description="Myocyte-specific enhancer factor 2D">
    <location>
        <begin position="1"/>
        <end position="507"/>
    </location>
</feature>
<feature type="domain" description="MADS-box" evidence="5">
    <location>
        <begin position="3"/>
        <end position="57"/>
    </location>
</feature>
<feature type="DNA-binding region" description="Mef2-type" evidence="4">
    <location>
        <begin position="58"/>
        <end position="86"/>
    </location>
</feature>
<feature type="region of interest" description="Disordered" evidence="6">
    <location>
        <begin position="174"/>
        <end position="207"/>
    </location>
</feature>
<feature type="region of interest" description="Disordered" evidence="6">
    <location>
        <begin position="244"/>
        <end position="267"/>
    </location>
</feature>
<feature type="region of interest" description="Disordered" evidence="6">
    <location>
        <begin position="357"/>
        <end position="392"/>
    </location>
</feature>
<feature type="region of interest" description="Disordered" evidence="6">
    <location>
        <begin position="423"/>
        <end position="507"/>
    </location>
</feature>
<feature type="compositionally biased region" description="Polar residues" evidence="6">
    <location>
        <begin position="180"/>
        <end position="192"/>
    </location>
</feature>
<feature type="compositionally biased region" description="Pro residues" evidence="6">
    <location>
        <begin position="363"/>
        <end position="389"/>
    </location>
</feature>
<feature type="modified residue" description="Phosphoserine" evidence="9">
    <location>
        <position position="98"/>
    </location>
</feature>
<feature type="modified residue" description="Phosphoserine" evidence="9">
    <location>
        <position position="106"/>
    </location>
</feature>
<feature type="modified residue" description="Phosphoserine" evidence="3">
    <location>
        <position position="110"/>
    </location>
</feature>
<feature type="modified residue" description="Phosphoserine" evidence="9">
    <location>
        <position position="121"/>
    </location>
</feature>
<feature type="modified residue" description="Phosphoserine" evidence="9">
    <location>
        <position position="180"/>
    </location>
</feature>
<feature type="modified residue" description="Phosphoserine; by PKA" evidence="3">
    <location>
        <position position="190"/>
    </location>
</feature>
<feature type="modified residue" description="Phosphoserine" evidence="9">
    <location>
        <position position="231"/>
    </location>
</feature>
<feature type="modified residue" description="N6-acetyllysine" evidence="2">
    <location>
        <position position="245"/>
    </location>
</feature>
<feature type="modified residue" description="Phosphoserine" evidence="9">
    <location>
        <position position="251"/>
    </location>
</feature>
<feature type="modified residue" description="N6-acetyllysine; alternate" evidence="2">
    <location>
        <position position="425"/>
    </location>
</feature>
<feature type="modified residue" description="Phosphoserine" evidence="2">
    <location>
        <position position="430"/>
    </location>
</feature>
<feature type="cross-link" description="Glycyl lysine isopeptide (Lys-Gly) (interchain with G-Cter in SUMO); alternate" evidence="1">
    <location>
        <position position="425"/>
    </location>
</feature>
<feature type="sequence conflict" description="In Ref. 2; AAH81790." evidence="8" ref="2">
    <original>R</original>
    <variation>G</variation>
    <location>
        <position position="208"/>
    </location>
</feature>
<protein>
    <recommendedName>
        <fullName>Myocyte-specific enhancer factor 2D</fullName>
    </recommendedName>
</protein>
<organism>
    <name type="scientific">Rattus norvegicus</name>
    <name type="common">Rat</name>
    <dbReference type="NCBI Taxonomy" id="10116"/>
    <lineage>
        <taxon>Eukaryota</taxon>
        <taxon>Metazoa</taxon>
        <taxon>Chordata</taxon>
        <taxon>Craniata</taxon>
        <taxon>Vertebrata</taxon>
        <taxon>Euteleostomi</taxon>
        <taxon>Mammalia</taxon>
        <taxon>Eutheria</taxon>
        <taxon>Euarchontoglires</taxon>
        <taxon>Glires</taxon>
        <taxon>Rodentia</taxon>
        <taxon>Myomorpha</taxon>
        <taxon>Muroidea</taxon>
        <taxon>Muridae</taxon>
        <taxon>Murinae</taxon>
        <taxon>Rattus</taxon>
    </lineage>
</organism>
<proteinExistence type="evidence at protein level"/>
<gene>
    <name type="primary">Mef2d</name>
</gene>
<sequence length="507" mass="54368">MGRKKIQIQRITDERNRQVTFTKRKFGLMKKAYELSVLCDCEIALIIFNHSNKLFQYASTDMDKVLLKYTEYNEPHESRTNADIIETLRKKGFNGCDSPEPDGEDSLEQSPLLEDKYRRASEELDGLFRRYGSSVPAPNFAMPVTVPVSNQSSMQFSNPSSSLVTPSLVTSSLTDPRLLSPQQPALQRNSVSPGLPQRPASAGAMLGRDLNSANGACPNPVGNGYVSARASPGLLPVANGNGLNKVIPAKSPPPPTHNTQLGAPSRKPDLRVITSQGGKGLMHHLNNAQRLGVSQSTHSLTTPVVSVATPSLLSQGLPFSSMPTAYNTDYQLPSAELSSLPAFSSPAGLALGNVTAWQQPQQPQQPQPPQPPQSQPQPPQPQPQQPPQQQPHLVPVSLSNLIPGSPLPHVGAALTVTTHPHISIKSEPVSPSRERSPAPPPPAVFPAARPEPGEGLSSPAGGSYETGDRDDGRGDFGPTLGLLRPAPEPEAEGSAVKRMRLDTWTLK</sequence>
<name>MEF2D_RAT</name>
<reference key="1">
    <citation type="journal article" date="1998" name="Nucleic Acids Res.">
        <title>Interaction of myocyte enhancer factor 2 (MEF2) with a mitogen-activated protein kinase, ERK5/BMK1.</title>
        <authorList>
            <person name="Yang C.-C."/>
            <person name="Ornatsky O.I."/>
            <person name="McDermott J.C."/>
            <person name="Cruz T.F."/>
            <person name="Prody C.A."/>
        </authorList>
    </citation>
    <scope>NUCLEOTIDE SEQUENCE [MRNA]</scope>
    <scope>INTERACTION WITH MAPK7</scope>
    <source>
        <strain>Wistar</strain>
        <tissue>Heart</tissue>
    </source>
</reference>
<reference key="2">
    <citation type="journal article" date="2004" name="Genome Res.">
        <title>The status, quality, and expansion of the NIH full-length cDNA project: the Mammalian Gene Collection (MGC).</title>
        <authorList>
            <consortium name="The MGC Project Team"/>
        </authorList>
    </citation>
    <scope>NUCLEOTIDE SEQUENCE [LARGE SCALE MRNA]</scope>
    <source>
        <tissue>Testis</tissue>
    </source>
</reference>
<reference key="3">
    <citation type="journal article" date="2012" name="Nat. Commun.">
        <title>Quantitative maps of protein phosphorylation sites across 14 different rat organs and tissues.</title>
        <authorList>
            <person name="Lundby A."/>
            <person name="Secher A."/>
            <person name="Lage K."/>
            <person name="Nordsborg N.B."/>
            <person name="Dmytriyev A."/>
            <person name="Lundby C."/>
            <person name="Olsen J.V."/>
        </authorList>
    </citation>
    <scope>PHOSPHORYLATION [LARGE SCALE ANALYSIS] AT SER-98; SER-106; SER-121; SER-180; SER-231 AND SER-251</scope>
    <scope>IDENTIFICATION BY MASS SPECTROMETRY [LARGE SCALE ANALYSIS]</scope>
</reference>